<name>RL29_AGRFC</name>
<dbReference type="EMBL" id="AE007869">
    <property type="protein sequence ID" value="AAK87700.1"/>
    <property type="molecule type" value="Genomic_DNA"/>
</dbReference>
<dbReference type="PIR" id="AH2814">
    <property type="entry name" value="AH2814"/>
</dbReference>
<dbReference type="PIR" id="C97593">
    <property type="entry name" value="C97593"/>
</dbReference>
<dbReference type="RefSeq" id="NP_354915.1">
    <property type="nucleotide sequence ID" value="NC_003062.2"/>
</dbReference>
<dbReference type="RefSeq" id="WP_003495193.1">
    <property type="nucleotide sequence ID" value="NC_003062.2"/>
</dbReference>
<dbReference type="SMR" id="Q8UE26"/>
<dbReference type="STRING" id="176299.Atu1938"/>
<dbReference type="EnsemblBacteria" id="AAK87700">
    <property type="protein sequence ID" value="AAK87700"/>
    <property type="gene ID" value="Atu1938"/>
</dbReference>
<dbReference type="GeneID" id="97364685"/>
<dbReference type="KEGG" id="atu:Atu1938"/>
<dbReference type="PATRIC" id="fig|176299.10.peg.1950"/>
<dbReference type="eggNOG" id="COG0255">
    <property type="taxonomic scope" value="Bacteria"/>
</dbReference>
<dbReference type="HOGENOM" id="CLU_158491_1_0_5"/>
<dbReference type="OrthoDB" id="9815192at2"/>
<dbReference type="PhylomeDB" id="Q8UE26"/>
<dbReference type="BioCyc" id="AGRO:ATU1938-MONOMER"/>
<dbReference type="PRO" id="PR:Q8UE26"/>
<dbReference type="Proteomes" id="UP000000813">
    <property type="component" value="Chromosome circular"/>
</dbReference>
<dbReference type="GO" id="GO:0022625">
    <property type="term" value="C:cytosolic large ribosomal subunit"/>
    <property type="evidence" value="ECO:0007669"/>
    <property type="project" value="TreeGrafter"/>
</dbReference>
<dbReference type="GO" id="GO:0003735">
    <property type="term" value="F:structural constituent of ribosome"/>
    <property type="evidence" value="ECO:0007669"/>
    <property type="project" value="InterPro"/>
</dbReference>
<dbReference type="GO" id="GO:0006412">
    <property type="term" value="P:translation"/>
    <property type="evidence" value="ECO:0007669"/>
    <property type="project" value="UniProtKB-UniRule"/>
</dbReference>
<dbReference type="CDD" id="cd00427">
    <property type="entry name" value="Ribosomal_L29_HIP"/>
    <property type="match status" value="1"/>
</dbReference>
<dbReference type="FunFam" id="1.10.287.310:FF:000001">
    <property type="entry name" value="50S ribosomal protein L29"/>
    <property type="match status" value="1"/>
</dbReference>
<dbReference type="Gene3D" id="1.10.287.310">
    <property type="match status" value="1"/>
</dbReference>
<dbReference type="HAMAP" id="MF_00374">
    <property type="entry name" value="Ribosomal_uL29"/>
    <property type="match status" value="1"/>
</dbReference>
<dbReference type="InterPro" id="IPR050063">
    <property type="entry name" value="Ribosomal_protein_uL29"/>
</dbReference>
<dbReference type="InterPro" id="IPR001854">
    <property type="entry name" value="Ribosomal_uL29"/>
</dbReference>
<dbReference type="InterPro" id="IPR018254">
    <property type="entry name" value="Ribosomal_uL29_CS"/>
</dbReference>
<dbReference type="InterPro" id="IPR036049">
    <property type="entry name" value="Ribosomal_uL29_sf"/>
</dbReference>
<dbReference type="NCBIfam" id="TIGR00012">
    <property type="entry name" value="L29"/>
    <property type="match status" value="1"/>
</dbReference>
<dbReference type="PANTHER" id="PTHR10916">
    <property type="entry name" value="60S RIBOSOMAL PROTEIN L35/50S RIBOSOMAL PROTEIN L29"/>
    <property type="match status" value="1"/>
</dbReference>
<dbReference type="PANTHER" id="PTHR10916:SF0">
    <property type="entry name" value="LARGE RIBOSOMAL SUBUNIT PROTEIN UL29C"/>
    <property type="match status" value="1"/>
</dbReference>
<dbReference type="Pfam" id="PF00831">
    <property type="entry name" value="Ribosomal_L29"/>
    <property type="match status" value="1"/>
</dbReference>
<dbReference type="SUPFAM" id="SSF46561">
    <property type="entry name" value="Ribosomal protein L29 (L29p)"/>
    <property type="match status" value="1"/>
</dbReference>
<dbReference type="PROSITE" id="PS00579">
    <property type="entry name" value="RIBOSOMAL_L29"/>
    <property type="match status" value="1"/>
</dbReference>
<sequence length="66" mass="7485">MKADEVRGLSADQLKDKLADLKKEQFNLRFQKATGQLEKSSRINEVRKDIARVKTIARQKAAEAKA</sequence>
<accession>Q8UE26</accession>
<comment type="similarity">
    <text evidence="1">Belongs to the universal ribosomal protein uL29 family.</text>
</comment>
<keyword id="KW-1185">Reference proteome</keyword>
<keyword id="KW-0687">Ribonucleoprotein</keyword>
<keyword id="KW-0689">Ribosomal protein</keyword>
<protein>
    <recommendedName>
        <fullName evidence="1">Large ribosomal subunit protein uL29</fullName>
    </recommendedName>
    <alternativeName>
        <fullName evidence="2">50S ribosomal protein L29</fullName>
    </alternativeName>
</protein>
<gene>
    <name evidence="1" type="primary">rpmC</name>
    <name type="ordered locus">Atu1938</name>
    <name type="ORF">AGR_C_3543</name>
</gene>
<organism>
    <name type="scientific">Agrobacterium fabrum (strain C58 / ATCC 33970)</name>
    <name type="common">Agrobacterium tumefaciens (strain C58)</name>
    <dbReference type="NCBI Taxonomy" id="176299"/>
    <lineage>
        <taxon>Bacteria</taxon>
        <taxon>Pseudomonadati</taxon>
        <taxon>Pseudomonadota</taxon>
        <taxon>Alphaproteobacteria</taxon>
        <taxon>Hyphomicrobiales</taxon>
        <taxon>Rhizobiaceae</taxon>
        <taxon>Rhizobium/Agrobacterium group</taxon>
        <taxon>Agrobacterium</taxon>
        <taxon>Agrobacterium tumefaciens complex</taxon>
    </lineage>
</organism>
<proteinExistence type="inferred from homology"/>
<evidence type="ECO:0000255" key="1">
    <source>
        <dbReference type="HAMAP-Rule" id="MF_00374"/>
    </source>
</evidence>
<evidence type="ECO:0000305" key="2"/>
<reference key="1">
    <citation type="journal article" date="2001" name="Science">
        <title>The genome of the natural genetic engineer Agrobacterium tumefaciens C58.</title>
        <authorList>
            <person name="Wood D.W."/>
            <person name="Setubal J.C."/>
            <person name="Kaul R."/>
            <person name="Monks D.E."/>
            <person name="Kitajima J.P."/>
            <person name="Okura V.K."/>
            <person name="Zhou Y."/>
            <person name="Chen L."/>
            <person name="Wood G.E."/>
            <person name="Almeida N.F. Jr."/>
            <person name="Woo L."/>
            <person name="Chen Y."/>
            <person name="Paulsen I.T."/>
            <person name="Eisen J.A."/>
            <person name="Karp P.D."/>
            <person name="Bovee D. Sr."/>
            <person name="Chapman P."/>
            <person name="Clendenning J."/>
            <person name="Deatherage G."/>
            <person name="Gillet W."/>
            <person name="Grant C."/>
            <person name="Kutyavin T."/>
            <person name="Levy R."/>
            <person name="Li M.-J."/>
            <person name="McClelland E."/>
            <person name="Palmieri A."/>
            <person name="Raymond C."/>
            <person name="Rouse G."/>
            <person name="Saenphimmachak C."/>
            <person name="Wu Z."/>
            <person name="Romero P."/>
            <person name="Gordon D."/>
            <person name="Zhang S."/>
            <person name="Yoo H."/>
            <person name="Tao Y."/>
            <person name="Biddle P."/>
            <person name="Jung M."/>
            <person name="Krespan W."/>
            <person name="Perry M."/>
            <person name="Gordon-Kamm B."/>
            <person name="Liao L."/>
            <person name="Kim S."/>
            <person name="Hendrick C."/>
            <person name="Zhao Z.-Y."/>
            <person name="Dolan M."/>
            <person name="Chumley F."/>
            <person name="Tingey S.V."/>
            <person name="Tomb J.-F."/>
            <person name="Gordon M.P."/>
            <person name="Olson M.V."/>
            <person name="Nester E.W."/>
        </authorList>
    </citation>
    <scope>NUCLEOTIDE SEQUENCE [LARGE SCALE GENOMIC DNA]</scope>
    <source>
        <strain>C58 / ATCC 33970</strain>
    </source>
</reference>
<reference key="2">
    <citation type="journal article" date="2001" name="Science">
        <title>Genome sequence of the plant pathogen and biotechnology agent Agrobacterium tumefaciens C58.</title>
        <authorList>
            <person name="Goodner B."/>
            <person name="Hinkle G."/>
            <person name="Gattung S."/>
            <person name="Miller N."/>
            <person name="Blanchard M."/>
            <person name="Qurollo B."/>
            <person name="Goldman B.S."/>
            <person name="Cao Y."/>
            <person name="Askenazi M."/>
            <person name="Halling C."/>
            <person name="Mullin L."/>
            <person name="Houmiel K."/>
            <person name="Gordon J."/>
            <person name="Vaudin M."/>
            <person name="Iartchouk O."/>
            <person name="Epp A."/>
            <person name="Liu F."/>
            <person name="Wollam C."/>
            <person name="Allinger M."/>
            <person name="Doughty D."/>
            <person name="Scott C."/>
            <person name="Lappas C."/>
            <person name="Markelz B."/>
            <person name="Flanagan C."/>
            <person name="Crowell C."/>
            <person name="Gurson J."/>
            <person name="Lomo C."/>
            <person name="Sear C."/>
            <person name="Strub G."/>
            <person name="Cielo C."/>
            <person name="Slater S."/>
        </authorList>
    </citation>
    <scope>NUCLEOTIDE SEQUENCE [LARGE SCALE GENOMIC DNA]</scope>
    <source>
        <strain>C58 / ATCC 33970</strain>
    </source>
</reference>
<feature type="chain" id="PRO_0000130343" description="Large ribosomal subunit protein uL29">
    <location>
        <begin position="1"/>
        <end position="66"/>
    </location>
</feature>